<comment type="function">
    <text evidence="1 4">Required for disulfide bond formation in some periplasmic proteins. Acts by transferring its disulfide bond to other proteins and is reduced in the process (By similarity). Necessary for extracellular secretion of the pertussis toxin (PTX).</text>
</comment>
<comment type="subcellular location">
    <subcellularLocation>
        <location evidence="1">Periplasm</location>
    </subcellularLocation>
</comment>
<comment type="similarity">
    <text evidence="5">Belongs to the thioredoxin family. DsbC subfamily.</text>
</comment>
<name>DSBC_BORPE</name>
<dbReference type="EMBL" id="BX640421">
    <property type="protein sequence ID" value="CAE43536.1"/>
    <property type="molecule type" value="Genomic_DNA"/>
</dbReference>
<dbReference type="RefSeq" id="NP_881814.1">
    <property type="nucleotide sequence ID" value="NC_002929.2"/>
</dbReference>
<dbReference type="RefSeq" id="WP_010931379.1">
    <property type="nucleotide sequence ID" value="NZ_CP039022.1"/>
</dbReference>
<dbReference type="SMR" id="Q7VU58"/>
<dbReference type="STRING" id="257313.BP3270"/>
<dbReference type="PaxDb" id="257313-BP3270"/>
<dbReference type="GeneID" id="69603196"/>
<dbReference type="KEGG" id="bpe:BP3270"/>
<dbReference type="PATRIC" id="fig|257313.5.peg.3541"/>
<dbReference type="eggNOG" id="COG1651">
    <property type="taxonomic scope" value="Bacteria"/>
</dbReference>
<dbReference type="HOGENOM" id="CLU_083593_1_0_4"/>
<dbReference type="Proteomes" id="UP000002676">
    <property type="component" value="Chromosome"/>
</dbReference>
<dbReference type="GO" id="GO:0042597">
    <property type="term" value="C:periplasmic space"/>
    <property type="evidence" value="ECO:0007669"/>
    <property type="project" value="UniProtKB-SubCell"/>
</dbReference>
<dbReference type="CDD" id="cd03020">
    <property type="entry name" value="DsbA_DsbC_DsbG"/>
    <property type="match status" value="1"/>
</dbReference>
<dbReference type="Gene3D" id="3.10.450.70">
    <property type="entry name" value="Disulphide bond isomerase, DsbC/G, N-terminal"/>
    <property type="match status" value="1"/>
</dbReference>
<dbReference type="Gene3D" id="3.40.30.10">
    <property type="entry name" value="Glutaredoxin"/>
    <property type="match status" value="1"/>
</dbReference>
<dbReference type="InterPro" id="IPR033954">
    <property type="entry name" value="DiS-bond_Isoase_DsbC/G"/>
</dbReference>
<dbReference type="InterPro" id="IPR018950">
    <property type="entry name" value="DiS-bond_isomerase_DsbC/G_N"/>
</dbReference>
<dbReference type="InterPro" id="IPR009094">
    <property type="entry name" value="DiS-bond_isomerase_DsbC/G_N_sf"/>
</dbReference>
<dbReference type="InterPro" id="IPR051470">
    <property type="entry name" value="Thiol:disulfide_interchange"/>
</dbReference>
<dbReference type="InterPro" id="IPR012336">
    <property type="entry name" value="Thioredoxin-like_fold"/>
</dbReference>
<dbReference type="InterPro" id="IPR036249">
    <property type="entry name" value="Thioredoxin-like_sf"/>
</dbReference>
<dbReference type="InterPro" id="IPR017937">
    <property type="entry name" value="Thioredoxin_CS"/>
</dbReference>
<dbReference type="PANTHER" id="PTHR35272:SF3">
    <property type="entry name" value="THIOL:DISULFIDE INTERCHANGE PROTEIN DSBC"/>
    <property type="match status" value="1"/>
</dbReference>
<dbReference type="PANTHER" id="PTHR35272">
    <property type="entry name" value="THIOL:DISULFIDE INTERCHANGE PROTEIN DSBC-RELATED"/>
    <property type="match status" value="1"/>
</dbReference>
<dbReference type="Pfam" id="PF10411">
    <property type="entry name" value="DsbC_N"/>
    <property type="match status" value="1"/>
</dbReference>
<dbReference type="Pfam" id="PF13098">
    <property type="entry name" value="Thioredoxin_2"/>
    <property type="match status" value="1"/>
</dbReference>
<dbReference type="SUPFAM" id="SSF52833">
    <property type="entry name" value="Thioredoxin-like"/>
    <property type="match status" value="1"/>
</dbReference>
<dbReference type="PROSITE" id="PS00194">
    <property type="entry name" value="THIOREDOXIN_1"/>
    <property type="match status" value="1"/>
</dbReference>
<sequence>MSGPSFSGAGMNFRITVWCAAAAVWSSGALAQDGAGQAAPGTPDKVYSTTGSAPAKPGDKVYSTRSAQAPDPQADAVKERFAQRFEGFDVTAVRRTPYGLFEVQIGTDLLYTDEKVTWVMEGPLIDALTRRDVTRERQEKLSSVPFEELPLDLAVKQVKGDGSRVMAVFEDPNCGYCKQLHRTLEDMDNITVYTFLYPILSPDSTTKVRDIWCASDPAKVWKDWMVRGQRPPTAECDAPVDQWLALGRQLMVRGTPAIFFKSGGRVSGALPRDELEARL</sequence>
<protein>
    <recommendedName>
        <fullName>Probable thiol:disulfide interchange protein DsbC</fullName>
    </recommendedName>
</protein>
<keyword id="KW-1015">Disulfide bond</keyword>
<keyword id="KW-0574">Periplasm</keyword>
<keyword id="KW-0676">Redox-active center</keyword>
<keyword id="KW-1185">Reference proteome</keyword>
<keyword id="KW-0732">Signal</keyword>
<gene>
    <name type="primary">dsbC</name>
    <name type="ordered locus">BP3270</name>
</gene>
<evidence type="ECO:0000250" key="1"/>
<evidence type="ECO:0000255" key="2"/>
<evidence type="ECO:0000256" key="3">
    <source>
        <dbReference type="SAM" id="MobiDB-lite"/>
    </source>
</evidence>
<evidence type="ECO:0000269" key="4">
    <source>
    </source>
</evidence>
<evidence type="ECO:0000305" key="5"/>
<proteinExistence type="evidence at protein level"/>
<feature type="signal peptide" evidence="2">
    <location>
        <begin position="1"/>
        <end position="31"/>
    </location>
</feature>
<feature type="chain" id="PRO_0000245645" description="Probable thiol:disulfide interchange protein DsbC">
    <location>
        <begin position="32"/>
        <end position="279"/>
    </location>
</feature>
<feature type="region of interest" description="Disordered" evidence="3">
    <location>
        <begin position="33"/>
        <end position="73"/>
    </location>
</feature>
<feature type="compositionally biased region" description="Low complexity" evidence="3">
    <location>
        <begin position="33"/>
        <end position="44"/>
    </location>
</feature>
<feature type="disulfide bond" description="Redox-active" evidence="1">
    <location>
        <begin position="174"/>
        <end position="177"/>
    </location>
</feature>
<feature type="disulfide bond" evidence="1">
    <location>
        <begin position="213"/>
        <end position="236"/>
    </location>
</feature>
<accession>Q7VU58</accession>
<organism>
    <name type="scientific">Bordetella pertussis (strain Tohama I / ATCC BAA-589 / NCTC 13251)</name>
    <dbReference type="NCBI Taxonomy" id="257313"/>
    <lineage>
        <taxon>Bacteria</taxon>
        <taxon>Pseudomonadati</taxon>
        <taxon>Pseudomonadota</taxon>
        <taxon>Betaproteobacteria</taxon>
        <taxon>Burkholderiales</taxon>
        <taxon>Alcaligenaceae</taxon>
        <taxon>Bordetella</taxon>
    </lineage>
</organism>
<reference key="1">
    <citation type="journal article" date="2003" name="Nat. Genet.">
        <title>Comparative analysis of the genome sequences of Bordetella pertussis, Bordetella parapertussis and Bordetella bronchiseptica.</title>
        <authorList>
            <person name="Parkhill J."/>
            <person name="Sebaihia M."/>
            <person name="Preston A."/>
            <person name="Murphy L.D."/>
            <person name="Thomson N.R."/>
            <person name="Harris D.E."/>
            <person name="Holden M.T.G."/>
            <person name="Churcher C.M."/>
            <person name="Bentley S.D."/>
            <person name="Mungall K.L."/>
            <person name="Cerdeno-Tarraga A.-M."/>
            <person name="Temple L."/>
            <person name="James K.D."/>
            <person name="Harris B."/>
            <person name="Quail M.A."/>
            <person name="Achtman M."/>
            <person name="Atkin R."/>
            <person name="Baker S."/>
            <person name="Basham D."/>
            <person name="Bason N."/>
            <person name="Cherevach I."/>
            <person name="Chillingworth T."/>
            <person name="Collins M."/>
            <person name="Cronin A."/>
            <person name="Davis P."/>
            <person name="Doggett J."/>
            <person name="Feltwell T."/>
            <person name="Goble A."/>
            <person name="Hamlin N."/>
            <person name="Hauser H."/>
            <person name="Holroyd S."/>
            <person name="Jagels K."/>
            <person name="Leather S."/>
            <person name="Moule S."/>
            <person name="Norberczak H."/>
            <person name="O'Neil S."/>
            <person name="Ormond D."/>
            <person name="Price C."/>
            <person name="Rabbinowitsch E."/>
            <person name="Rutter S."/>
            <person name="Sanders M."/>
            <person name="Saunders D."/>
            <person name="Seeger K."/>
            <person name="Sharp S."/>
            <person name="Simmonds M."/>
            <person name="Skelton J."/>
            <person name="Squares R."/>
            <person name="Squares S."/>
            <person name="Stevens K."/>
            <person name="Unwin L."/>
            <person name="Whitehead S."/>
            <person name="Barrell B.G."/>
            <person name="Maskell D.J."/>
        </authorList>
    </citation>
    <scope>NUCLEOTIDE SEQUENCE [LARGE SCALE GENOMIC DNA]</scope>
    <source>
        <strain>Tohama I / ATCC BAA-589 / NCTC 13251</strain>
    </source>
</reference>
<reference key="2">
    <citation type="journal article" date="2002" name="Infect. Immun.">
        <title>DsbA and DsbC are required for secretion of pertussis toxin by Bordetella pertussis.</title>
        <authorList>
            <person name="Stenson T.H."/>
            <person name="Weiss A.A."/>
        </authorList>
    </citation>
    <scope>FUNCTION IN PERTUSSIS TOXIN SECRETION</scope>
    <source>
        <strain>Tohama I / BP338</strain>
    </source>
</reference>